<proteinExistence type="evidence at transcript level"/>
<sequence length="172" mass="19794">MSKATKRKHVVKEVLEDYVTPTEDQQIMRVLGSNGNNLHEAVTGSGERFLLSMPTKFRKNIWIKRGDFVIVDPIKEGGKVKGEISFILYRDHIQHLRKLGVWPEGFQEDRTSGERNEGTQKERSEEKEEEEGDSESEDDDSDLFVNTNRATVLYSESEEETDEDEEEDKGRA</sequence>
<name>EIF1A_DANRE</name>
<keyword id="KW-0539">Nucleus</keyword>
<keyword id="KW-1185">Reference proteome</keyword>
<keyword id="KW-0694">RNA-binding</keyword>
<accession>Q7SY07</accession>
<organism>
    <name type="scientific">Danio rerio</name>
    <name type="common">Zebrafish</name>
    <name type="synonym">Brachydanio rerio</name>
    <dbReference type="NCBI Taxonomy" id="7955"/>
    <lineage>
        <taxon>Eukaryota</taxon>
        <taxon>Metazoa</taxon>
        <taxon>Chordata</taxon>
        <taxon>Craniata</taxon>
        <taxon>Vertebrata</taxon>
        <taxon>Euteleostomi</taxon>
        <taxon>Actinopterygii</taxon>
        <taxon>Neopterygii</taxon>
        <taxon>Teleostei</taxon>
        <taxon>Ostariophysi</taxon>
        <taxon>Cypriniformes</taxon>
        <taxon>Danionidae</taxon>
        <taxon>Danioninae</taxon>
        <taxon>Danio</taxon>
    </lineage>
</organism>
<comment type="function">
    <text evidence="1">May play a role into cellular response to oxidative stress. May decrease cell proliferation (By similarity).</text>
</comment>
<comment type="subcellular location">
    <subcellularLocation>
        <location evidence="1">Nucleus</location>
    </subcellularLocation>
</comment>
<comment type="similarity">
    <text evidence="4">Belongs to the EIF1AD family.</text>
</comment>
<protein>
    <recommendedName>
        <fullName>Probable RNA-binding protein EIF1AD</fullName>
    </recommendedName>
    <alternativeName>
        <fullName>Eukaryotic translation initiation factor 1A domain-containing protein</fullName>
    </alternativeName>
</protein>
<gene>
    <name type="primary">eif1ad</name>
    <name type="ORF">zgc:63631</name>
</gene>
<reference key="1">
    <citation type="submission" date="2003-07" db="EMBL/GenBank/DDBJ databases">
        <authorList>
            <consortium name="NIH - Zebrafish Gene Collection (ZGC) project"/>
        </authorList>
    </citation>
    <scope>NUCLEOTIDE SEQUENCE [LARGE SCALE MRNA]</scope>
</reference>
<evidence type="ECO:0000250" key="1"/>
<evidence type="ECO:0000255" key="2">
    <source>
        <dbReference type="PROSITE-ProRule" id="PRU00181"/>
    </source>
</evidence>
<evidence type="ECO:0000256" key="3">
    <source>
        <dbReference type="SAM" id="MobiDB-lite"/>
    </source>
</evidence>
<evidence type="ECO:0000305" key="4"/>
<dbReference type="EMBL" id="BC055173">
    <property type="protein sequence ID" value="AAH55173.1"/>
    <property type="molecule type" value="mRNA"/>
</dbReference>
<dbReference type="RefSeq" id="NP_956762.1">
    <property type="nucleotide sequence ID" value="NM_200468.1"/>
</dbReference>
<dbReference type="SMR" id="Q7SY07"/>
<dbReference type="FunCoup" id="Q7SY07">
    <property type="interactions" value="2234"/>
</dbReference>
<dbReference type="STRING" id="7955.ENSDARP00000027788"/>
<dbReference type="PaxDb" id="7955-ENSDARP00000027788"/>
<dbReference type="GeneID" id="393440"/>
<dbReference type="KEGG" id="dre:393440"/>
<dbReference type="AGR" id="ZFIN:ZDB-GENE-040426-1199"/>
<dbReference type="CTD" id="84285"/>
<dbReference type="ZFIN" id="ZDB-GENE-040426-1199">
    <property type="gene designation" value="eif1ad"/>
</dbReference>
<dbReference type="eggNOG" id="KOG2925">
    <property type="taxonomic scope" value="Eukaryota"/>
</dbReference>
<dbReference type="InParanoid" id="Q7SY07"/>
<dbReference type="OrthoDB" id="1738325at2759"/>
<dbReference type="PhylomeDB" id="Q7SY07"/>
<dbReference type="PRO" id="PR:Q7SY07"/>
<dbReference type="Proteomes" id="UP000000437">
    <property type="component" value="Alternate scaffold 14"/>
</dbReference>
<dbReference type="Proteomes" id="UP000000437">
    <property type="component" value="Chromosome 14"/>
</dbReference>
<dbReference type="GO" id="GO:0005634">
    <property type="term" value="C:nucleus"/>
    <property type="evidence" value="ECO:0000318"/>
    <property type="project" value="GO_Central"/>
</dbReference>
<dbReference type="GO" id="GO:0003723">
    <property type="term" value="F:RNA binding"/>
    <property type="evidence" value="ECO:0007669"/>
    <property type="project" value="UniProtKB-KW"/>
</dbReference>
<dbReference type="GO" id="GO:0003743">
    <property type="term" value="F:translation initiation factor activity"/>
    <property type="evidence" value="ECO:0007669"/>
    <property type="project" value="InterPro"/>
</dbReference>
<dbReference type="Gene3D" id="2.40.50.140">
    <property type="entry name" value="Nucleic acid-binding proteins"/>
    <property type="match status" value="1"/>
</dbReference>
<dbReference type="InterPro" id="IPR039294">
    <property type="entry name" value="EIF1AD"/>
</dbReference>
<dbReference type="InterPro" id="IPR012340">
    <property type="entry name" value="NA-bd_OB-fold"/>
</dbReference>
<dbReference type="InterPro" id="IPR006196">
    <property type="entry name" value="RNA-binding_domain_S1_IF1"/>
</dbReference>
<dbReference type="InterPro" id="IPR001253">
    <property type="entry name" value="TIF_eIF-1A"/>
</dbReference>
<dbReference type="PANTHER" id="PTHR21641:SF0">
    <property type="entry name" value="RNA-BINDING PROTEIN EIF1AD-RELATED"/>
    <property type="match status" value="1"/>
</dbReference>
<dbReference type="PANTHER" id="PTHR21641">
    <property type="entry name" value="TRANSLATION INITIATION FACTOR-RELATED"/>
    <property type="match status" value="1"/>
</dbReference>
<dbReference type="Pfam" id="PF01176">
    <property type="entry name" value="eIF-1a"/>
    <property type="match status" value="1"/>
</dbReference>
<dbReference type="SMART" id="SM00652">
    <property type="entry name" value="eIF1a"/>
    <property type="match status" value="1"/>
</dbReference>
<dbReference type="SUPFAM" id="SSF50249">
    <property type="entry name" value="Nucleic acid-binding proteins"/>
    <property type="match status" value="1"/>
</dbReference>
<dbReference type="PROSITE" id="PS50832">
    <property type="entry name" value="S1_IF1_TYPE"/>
    <property type="match status" value="1"/>
</dbReference>
<feature type="chain" id="PRO_0000314157" description="Probable RNA-binding protein EIF1AD">
    <location>
        <begin position="1"/>
        <end position="172"/>
    </location>
</feature>
<feature type="domain" description="S1-like" evidence="2">
    <location>
        <begin position="5"/>
        <end position="89"/>
    </location>
</feature>
<feature type="region of interest" description="Disordered" evidence="3">
    <location>
        <begin position="107"/>
        <end position="172"/>
    </location>
</feature>
<feature type="compositionally biased region" description="Basic and acidic residues" evidence="3">
    <location>
        <begin position="107"/>
        <end position="126"/>
    </location>
</feature>
<feature type="compositionally biased region" description="Acidic residues" evidence="3">
    <location>
        <begin position="127"/>
        <end position="142"/>
    </location>
</feature>
<feature type="compositionally biased region" description="Acidic residues" evidence="3">
    <location>
        <begin position="156"/>
        <end position="172"/>
    </location>
</feature>